<name>CC1_BUNCI</name>
<keyword id="KW-0903">Direct protein sequencing</keyword>
<keyword id="KW-0166">Nematocyst</keyword>
<keyword id="KW-0964">Secreted</keyword>
<protein>
    <recommendedName>
        <fullName evidence="2">Cationic protein C1</fullName>
    </recommendedName>
</protein>
<organism>
    <name type="scientific">Bunodosoma caissarum</name>
    <name type="common">Sea anemone</name>
    <dbReference type="NCBI Taxonomy" id="31165"/>
    <lineage>
        <taxon>Eukaryota</taxon>
        <taxon>Metazoa</taxon>
        <taxon>Cnidaria</taxon>
        <taxon>Anthozoa</taxon>
        <taxon>Hexacorallia</taxon>
        <taxon>Actiniaria</taxon>
        <taxon>Actiniidae</taxon>
        <taxon>Bunodosoma</taxon>
    </lineage>
</organism>
<dbReference type="GO" id="GO:0005576">
    <property type="term" value="C:extracellular region"/>
    <property type="evidence" value="ECO:0007669"/>
    <property type="project" value="UniProtKB-SubCell"/>
</dbReference>
<dbReference type="GO" id="GO:0042151">
    <property type="term" value="C:nematocyst"/>
    <property type="evidence" value="ECO:0007669"/>
    <property type="project" value="UniProtKB-SubCell"/>
</dbReference>
<comment type="subcellular location">
    <subcellularLocation>
        <location>Secreted</location>
    </subcellularLocation>
    <subcellularLocation>
        <location>Nematocyst</location>
    </subcellularLocation>
</comment>
<comment type="mass spectrometry" mass="15495.0" method="MALDI" evidence="1"/>
<comment type="miscellaneous">
    <text evidence="1">Does not have hemolytic activity, phospholipase A2 activity and acute toxicity in crabs and mice.</text>
</comment>
<evidence type="ECO:0000269" key="1">
    <source>
    </source>
</evidence>
<evidence type="ECO:0000303" key="2">
    <source>
    </source>
</evidence>
<feature type="chain" id="PRO_0000281192" description="Cationic protein C1">
    <location>
        <begin position="1"/>
        <end position="27" status="greater than"/>
    </location>
</feature>
<feature type="non-terminal residue">
    <location>
        <position position="27"/>
    </location>
</feature>
<accession>P0C2M4</accession>
<reference key="1">
    <citation type="journal article" date="2006" name="Biochim. Biophys. Acta">
        <title>Caissarolysin I (Bcs I), a new hemolytic toxin from the Brazilian sea anemone Bunodosoma caissarum: purification and biological characterization.</title>
        <authorList>
            <person name="de Oliveira J.S."/>
            <person name="Zaharenko A.J."/>
            <person name="de Freitas J.C."/>
            <person name="Konno K."/>
            <person name="de Andrade S.A."/>
            <person name="Portaro F.C.V."/>
            <person name="Richardson M."/>
            <person name="Sant'anna O.A."/>
            <person name="Tambourgi D.V."/>
        </authorList>
    </citation>
    <scope>PROTEIN SEQUENCE</scope>
    <scope>MASS SPECTROMETRY</scope>
</reference>
<sequence length="27" mass="3050">GLRDFNVAVRASNGKYWTRRPESGTLV</sequence>
<proteinExistence type="evidence at protein level"/>